<sequence>MASAAVGNYEEEIVRPVADFSPSLWGDQFLSFSIENQVAEKYAQEIEALKEQTRSMLLENGRKLADTLYLIDIIERLGISYHFEKEIDDILDQIYNQNSNCNDLCTSALQFRLLRQHGFNISPEIFSKFQDENGKFKESLASDFLGLLNLYEASHVRTHADDILEEALAFSTIHLESAAPHLKSPLREQVTHALEQCLHKGVPRVETRFFISSIYEKEQSKNDVLLRFAKLDFNLLQILHKQELAEVSRWWKDLDFVTTLPYARDRVVECYFWALGVYFEPQYSQARVILVKTISMISIVDDTFDAYGTIKELETYTDAIQRWDINEIDRLPDYMKISYKAILDLYKDYEKELSSAGRSHIVCHAIERMKEVVKNYNVESTWFIEGYMPPVSEYLSNALATTTYYYLATTSYLGMKSATEQDFEWLSKNPKILEASVIICRVIDDTATYEVEKSRGQIATGIECCMRDYGVSTKEAMAKFQGMAEAAWKDLNEGFLRPTPVSTEILFRILNLARIVEVTYIHNLDGYTHPEKVLKPHINALLVDSIEI</sequence>
<feature type="chain" id="PRO_0000412246" description="5-epi-aristolochene synthase 3">
    <location>
        <begin position="1"/>
        <end position="548"/>
    </location>
</feature>
<feature type="short sequence motif" description="DDXXD motif">
    <location>
        <begin position="301"/>
        <end position="305"/>
    </location>
</feature>
<feature type="binding site" evidence="1">
    <location>
        <position position="301"/>
    </location>
    <ligand>
        <name>Mg(2+)</name>
        <dbReference type="ChEBI" id="CHEBI:18420"/>
        <label>1</label>
    </ligand>
</feature>
<feature type="binding site" evidence="1">
    <location>
        <position position="301"/>
    </location>
    <ligand>
        <name>Mg(2+)</name>
        <dbReference type="ChEBI" id="CHEBI:18420"/>
        <label>2</label>
    </ligand>
</feature>
<feature type="binding site" evidence="1">
    <location>
        <position position="305"/>
    </location>
    <ligand>
        <name>Mg(2+)</name>
        <dbReference type="ChEBI" id="CHEBI:18420"/>
        <label>1</label>
    </ligand>
</feature>
<feature type="binding site" evidence="1">
    <location>
        <position position="305"/>
    </location>
    <ligand>
        <name>Mg(2+)</name>
        <dbReference type="ChEBI" id="CHEBI:18420"/>
        <label>2</label>
    </ligand>
</feature>
<feature type="binding site" evidence="1">
    <location>
        <position position="444"/>
    </location>
    <ligand>
        <name>Mg(2+)</name>
        <dbReference type="ChEBI" id="CHEBI:18420"/>
        <label>3</label>
    </ligand>
</feature>
<feature type="binding site" evidence="1">
    <location>
        <position position="448"/>
    </location>
    <ligand>
        <name>Mg(2+)</name>
        <dbReference type="ChEBI" id="CHEBI:18420"/>
        <label>3</label>
    </ligand>
</feature>
<feature type="binding site" evidence="1">
    <location>
        <position position="452"/>
    </location>
    <ligand>
        <name>Mg(2+)</name>
        <dbReference type="ChEBI" id="CHEBI:18420"/>
        <label>3</label>
    </ligand>
</feature>
<dbReference type="EC" id="4.2.3.61"/>
<dbReference type="EMBL" id="AF484123">
    <property type="protein sequence ID" value="AAP05760.1"/>
    <property type="molecule type" value="mRNA"/>
</dbReference>
<dbReference type="RefSeq" id="NP_001413014.1">
    <property type="nucleotide sequence ID" value="NM_001426085.1"/>
</dbReference>
<dbReference type="RefSeq" id="XP_019264101.1">
    <property type="nucleotide sequence ID" value="XM_019408556.1"/>
</dbReference>
<dbReference type="SMR" id="Q84LF2"/>
<dbReference type="EnsemblPlants" id="OIT36657">
    <property type="protein sequence ID" value="OIT36657"/>
    <property type="gene ID" value="A4A49_08386"/>
</dbReference>
<dbReference type="GeneID" id="109241781"/>
<dbReference type="Gramene" id="OIT36657">
    <property type="protein sequence ID" value="OIT36657"/>
    <property type="gene ID" value="A4A49_08386"/>
</dbReference>
<dbReference type="KEGG" id="nau:109241781"/>
<dbReference type="OrthoDB" id="1266079at2759"/>
<dbReference type="BioCyc" id="MetaCyc:EAS12-MONOMER"/>
<dbReference type="BRENDA" id="4.2.3.61">
    <property type="organism ID" value="9729"/>
</dbReference>
<dbReference type="UniPathway" id="UPA00213"/>
<dbReference type="GO" id="GO:0005737">
    <property type="term" value="C:cytoplasm"/>
    <property type="evidence" value="ECO:0007669"/>
    <property type="project" value="UniProtKB-SubCell"/>
</dbReference>
<dbReference type="GO" id="GO:0102698">
    <property type="term" value="F:5-epi-aristolochene synthase activity"/>
    <property type="evidence" value="ECO:0007669"/>
    <property type="project" value="UniProtKB-EC"/>
</dbReference>
<dbReference type="GO" id="GO:0000287">
    <property type="term" value="F:magnesium ion binding"/>
    <property type="evidence" value="ECO:0007669"/>
    <property type="project" value="InterPro"/>
</dbReference>
<dbReference type="GO" id="GO:0010333">
    <property type="term" value="F:terpene synthase activity"/>
    <property type="evidence" value="ECO:0007669"/>
    <property type="project" value="InterPro"/>
</dbReference>
<dbReference type="GO" id="GO:0006952">
    <property type="term" value="P:defense response"/>
    <property type="evidence" value="ECO:0007669"/>
    <property type="project" value="UniProtKB-KW"/>
</dbReference>
<dbReference type="GO" id="GO:0016102">
    <property type="term" value="P:diterpenoid biosynthetic process"/>
    <property type="evidence" value="ECO:0007669"/>
    <property type="project" value="InterPro"/>
</dbReference>
<dbReference type="CDD" id="cd00684">
    <property type="entry name" value="Terpene_cyclase_plant_C1"/>
    <property type="match status" value="1"/>
</dbReference>
<dbReference type="FunFam" id="1.10.600.10:FF:000007">
    <property type="entry name" value="Isoprene synthase, chloroplastic"/>
    <property type="match status" value="1"/>
</dbReference>
<dbReference type="FunFam" id="1.50.10.130:FF:000001">
    <property type="entry name" value="Isoprene synthase, chloroplastic"/>
    <property type="match status" value="1"/>
</dbReference>
<dbReference type="Gene3D" id="1.10.600.10">
    <property type="entry name" value="Farnesyl Diphosphate Synthase"/>
    <property type="match status" value="1"/>
</dbReference>
<dbReference type="Gene3D" id="1.50.10.130">
    <property type="entry name" value="Terpene synthase, N-terminal domain"/>
    <property type="match status" value="1"/>
</dbReference>
<dbReference type="InterPro" id="IPR008949">
    <property type="entry name" value="Isoprenoid_synthase_dom_sf"/>
</dbReference>
<dbReference type="InterPro" id="IPR044814">
    <property type="entry name" value="Terpene_cyclase_plant_C1"/>
</dbReference>
<dbReference type="InterPro" id="IPR001906">
    <property type="entry name" value="Terpene_synth_N"/>
</dbReference>
<dbReference type="InterPro" id="IPR036965">
    <property type="entry name" value="Terpene_synth_N_sf"/>
</dbReference>
<dbReference type="InterPro" id="IPR050148">
    <property type="entry name" value="Terpene_synthase-like"/>
</dbReference>
<dbReference type="InterPro" id="IPR005630">
    <property type="entry name" value="Terpene_synthase_metal-bd"/>
</dbReference>
<dbReference type="InterPro" id="IPR008930">
    <property type="entry name" value="Terpenoid_cyclase/PrenylTrfase"/>
</dbReference>
<dbReference type="PANTHER" id="PTHR31225:SF93">
    <property type="entry name" value="ALPHA-HUMULENE_(-)-(E)-BETA-CARYOPHYLLENE SYNTHASE"/>
    <property type="match status" value="1"/>
</dbReference>
<dbReference type="PANTHER" id="PTHR31225">
    <property type="entry name" value="OS04G0344100 PROTEIN-RELATED"/>
    <property type="match status" value="1"/>
</dbReference>
<dbReference type="Pfam" id="PF01397">
    <property type="entry name" value="Terpene_synth"/>
    <property type="match status" value="1"/>
</dbReference>
<dbReference type="Pfam" id="PF03936">
    <property type="entry name" value="Terpene_synth_C"/>
    <property type="match status" value="1"/>
</dbReference>
<dbReference type="SFLD" id="SFLDS00005">
    <property type="entry name" value="Isoprenoid_Synthase_Type_I"/>
    <property type="match status" value="1"/>
</dbReference>
<dbReference type="SFLD" id="SFLDG01604">
    <property type="entry name" value="Terpene_Cyclase_Like_1_C_Termi"/>
    <property type="match status" value="1"/>
</dbReference>
<dbReference type="SFLD" id="SFLDG01014">
    <property type="entry name" value="Terpene_Cyclase_Like_1_N-term"/>
    <property type="match status" value="1"/>
</dbReference>
<dbReference type="SUPFAM" id="SSF48239">
    <property type="entry name" value="Terpenoid cyclases/Protein prenyltransferases"/>
    <property type="match status" value="1"/>
</dbReference>
<dbReference type="SUPFAM" id="SSF48576">
    <property type="entry name" value="Terpenoid synthases"/>
    <property type="match status" value="1"/>
</dbReference>
<comment type="function">
    <text evidence="2">Catalyzes the cyclization of trans,trans-farnesyl diphosphate (FPP) to the bicyclic intermediate 5-epi-aristolochene, initial step in the conversion of FPP to the sesquiterpenoid antifungal phytoalexin capsidiol. Produces germacrene A as an enzyme-bound intermediate that is not released by the enzyme, but is further cyclized to produce the bicyclic 5-epi-aristolochene.</text>
</comment>
<comment type="catalytic activity">
    <reaction evidence="2">
        <text>(2E,6E)-farnesyl diphosphate = (+)-5-epi-aristolochene + diphosphate</text>
        <dbReference type="Rhea" id="RHEA:28635"/>
        <dbReference type="ChEBI" id="CHEBI:23925"/>
        <dbReference type="ChEBI" id="CHEBI:33019"/>
        <dbReference type="ChEBI" id="CHEBI:175763"/>
        <dbReference type="EC" id="4.2.3.61"/>
    </reaction>
</comment>
<comment type="cofactor">
    <cofactor evidence="1">
        <name>Mg(2+)</name>
        <dbReference type="ChEBI" id="CHEBI:18420"/>
    </cofactor>
    <text evidence="1">Binds 3 Mg(2+) ions per subunit.</text>
</comment>
<comment type="pathway">
    <text>Secondary metabolite biosynthesis; terpenoid biosynthesis.</text>
</comment>
<comment type="subunit">
    <text evidence="1">Monomer.</text>
</comment>
<comment type="subcellular location">
    <subcellularLocation>
        <location evidence="3">Cytoplasm</location>
    </subcellularLocation>
</comment>
<comment type="tissue specificity">
    <text evidence="2">Expressed in roots, but not in shoots.</text>
</comment>
<comment type="domain">
    <text evidence="1">The Asp-Asp-Xaa-Xaa-Asp/Glu (DDXXD/E) motif is important for the catalytic activity, presumably through binding to Mg(2+).</text>
</comment>
<comment type="similarity">
    <text evidence="3">Belongs to the terpene synthase family.</text>
</comment>
<keyword id="KW-0963">Cytoplasm</keyword>
<keyword id="KW-0456">Lyase</keyword>
<keyword id="KW-0460">Magnesium</keyword>
<keyword id="KW-0479">Metal-binding</keyword>
<keyword id="KW-0611">Plant defense</keyword>
<protein>
    <recommendedName>
        <fullName>5-epi-aristolochene synthase 3</fullName>
        <shortName>NaEAS12</shortName>
        <ecNumber>4.2.3.61</ecNumber>
    </recommendedName>
</protein>
<proteinExistence type="evidence at protein level"/>
<organism>
    <name type="scientific">Nicotiana attenuata</name>
    <name type="common">Coyote tobacco</name>
    <dbReference type="NCBI Taxonomy" id="49451"/>
    <lineage>
        <taxon>Eukaryota</taxon>
        <taxon>Viridiplantae</taxon>
        <taxon>Streptophyta</taxon>
        <taxon>Embryophyta</taxon>
        <taxon>Tracheophyta</taxon>
        <taxon>Spermatophyta</taxon>
        <taxon>Magnoliopsida</taxon>
        <taxon>eudicotyledons</taxon>
        <taxon>Gunneridae</taxon>
        <taxon>Pentapetalae</taxon>
        <taxon>asterids</taxon>
        <taxon>lamiids</taxon>
        <taxon>Solanales</taxon>
        <taxon>Solanaceae</taxon>
        <taxon>Nicotianoideae</taxon>
        <taxon>Nicotianeae</taxon>
        <taxon>Nicotiana</taxon>
    </lineage>
</organism>
<accession>Q84LF2</accession>
<name>5EAS3_NICAT</name>
<evidence type="ECO:0000250" key="1"/>
<evidence type="ECO:0000269" key="2">
    <source>
    </source>
</evidence>
<evidence type="ECO:0000305" key="3"/>
<reference key="1">
    <citation type="journal article" date="2002" name="Phytochemistry">
        <title>Gene expression of 5-epi-aristolochene synthase and formation of capsidiol in roots of Nicotiana attenuata and N. sylvestris.</title>
        <authorList>
            <person name="Bohlmann J."/>
            <person name="Stauber E.J."/>
            <person name="Krock B."/>
            <person name="Oldham N.J."/>
            <person name="Gershenzon J."/>
            <person name="Baldwin I.T."/>
        </authorList>
    </citation>
    <scope>NUCLEOTIDE SEQUENCE [MRNA]</scope>
    <scope>FUNCTION</scope>
    <scope>CATALYTIC ACTIVITY</scope>
    <scope>TISSUE SPECIFICITY</scope>
</reference>